<organism>
    <name type="scientific">Yersinia pestis</name>
    <dbReference type="NCBI Taxonomy" id="632"/>
    <lineage>
        <taxon>Bacteria</taxon>
        <taxon>Pseudomonadati</taxon>
        <taxon>Pseudomonadota</taxon>
        <taxon>Gammaproteobacteria</taxon>
        <taxon>Enterobacterales</taxon>
        <taxon>Yersiniaceae</taxon>
        <taxon>Yersinia</taxon>
    </lineage>
</organism>
<proteinExistence type="inferred from homology"/>
<evidence type="ECO:0000255" key="1">
    <source>
        <dbReference type="HAMAP-Rule" id="MF_00552"/>
    </source>
</evidence>
<dbReference type="EMBL" id="AL590842">
    <property type="protein sequence ID" value="CAL19795.1"/>
    <property type="molecule type" value="Genomic_DNA"/>
</dbReference>
<dbReference type="EMBL" id="AE009952">
    <property type="protein sequence ID" value="AAM86600.1"/>
    <property type="molecule type" value="Genomic_DNA"/>
</dbReference>
<dbReference type="EMBL" id="AE017042">
    <property type="protein sequence ID" value="AAS61277.1"/>
    <property type="molecule type" value="Genomic_DNA"/>
</dbReference>
<dbReference type="PIR" id="AI0138">
    <property type="entry name" value="AI0138"/>
</dbReference>
<dbReference type="RefSeq" id="WP_002210743.1">
    <property type="nucleotide sequence ID" value="NZ_WUCM01000016.1"/>
</dbReference>
<dbReference type="RefSeq" id="YP_002346172.1">
    <property type="nucleotide sequence ID" value="NC_003143.1"/>
</dbReference>
<dbReference type="SMR" id="Q8ZGY6"/>
<dbReference type="STRING" id="214092.YPO1129"/>
<dbReference type="PaxDb" id="214092-YPO1129"/>
<dbReference type="DNASU" id="1147997"/>
<dbReference type="EnsemblBacteria" id="AAS61277">
    <property type="protein sequence ID" value="AAS61277"/>
    <property type="gene ID" value="YP_1027"/>
</dbReference>
<dbReference type="GeneID" id="57977268"/>
<dbReference type="KEGG" id="ype:YPO1129"/>
<dbReference type="KEGG" id="ypk:y3050"/>
<dbReference type="KEGG" id="ypm:YP_1027"/>
<dbReference type="PATRIC" id="fig|214092.21.peg.1422"/>
<dbReference type="eggNOG" id="COG1230">
    <property type="taxonomic scope" value="Bacteria"/>
</dbReference>
<dbReference type="HOGENOM" id="CLU_013430_0_0_6"/>
<dbReference type="OMA" id="GHEKMLH"/>
<dbReference type="OrthoDB" id="9809646at2"/>
<dbReference type="Proteomes" id="UP000000815">
    <property type="component" value="Chromosome"/>
</dbReference>
<dbReference type="Proteomes" id="UP000001019">
    <property type="component" value="Chromosome"/>
</dbReference>
<dbReference type="Proteomes" id="UP000002490">
    <property type="component" value="Chromosome"/>
</dbReference>
<dbReference type="GO" id="GO:0005886">
    <property type="term" value="C:plasma membrane"/>
    <property type="evidence" value="ECO:0000318"/>
    <property type="project" value="GO_Central"/>
</dbReference>
<dbReference type="GO" id="GO:0005385">
    <property type="term" value="F:zinc ion transmembrane transporter activity"/>
    <property type="evidence" value="ECO:0000318"/>
    <property type="project" value="GO_Central"/>
</dbReference>
<dbReference type="GO" id="GO:0071577">
    <property type="term" value="P:zinc ion transmembrane transport"/>
    <property type="evidence" value="ECO:0000318"/>
    <property type="project" value="GO_Central"/>
</dbReference>
<dbReference type="FunFam" id="1.20.1510.10:FF:000016">
    <property type="entry name" value="Zinc transporter ZitB"/>
    <property type="match status" value="1"/>
</dbReference>
<dbReference type="Gene3D" id="1.20.1510.10">
    <property type="entry name" value="Cation efflux protein transmembrane domain"/>
    <property type="match status" value="1"/>
</dbReference>
<dbReference type="HAMAP" id="MF_00552">
    <property type="entry name" value="ZitB"/>
    <property type="match status" value="1"/>
</dbReference>
<dbReference type="InterPro" id="IPR002524">
    <property type="entry name" value="Cation_efflux"/>
</dbReference>
<dbReference type="InterPro" id="IPR036837">
    <property type="entry name" value="Cation_efflux_CTD_sf"/>
</dbReference>
<dbReference type="InterPro" id="IPR027469">
    <property type="entry name" value="Cation_efflux_TMD_sf"/>
</dbReference>
<dbReference type="InterPro" id="IPR050681">
    <property type="entry name" value="CDF/SLC30A"/>
</dbReference>
<dbReference type="InterPro" id="IPR023500">
    <property type="entry name" value="Zn_transptr_ZitB"/>
</dbReference>
<dbReference type="NCBIfam" id="TIGR01297">
    <property type="entry name" value="CDF"/>
    <property type="match status" value="1"/>
</dbReference>
<dbReference type="NCBIfam" id="NF002923">
    <property type="entry name" value="PRK03557.1"/>
    <property type="match status" value="1"/>
</dbReference>
<dbReference type="PANTHER" id="PTHR11562">
    <property type="entry name" value="CATION EFFLUX PROTEIN/ ZINC TRANSPORTER"/>
    <property type="match status" value="1"/>
</dbReference>
<dbReference type="PANTHER" id="PTHR11562:SF17">
    <property type="entry name" value="RE54080P-RELATED"/>
    <property type="match status" value="1"/>
</dbReference>
<dbReference type="Pfam" id="PF01545">
    <property type="entry name" value="Cation_efflux"/>
    <property type="match status" value="1"/>
</dbReference>
<dbReference type="SUPFAM" id="SSF160240">
    <property type="entry name" value="Cation efflux protein cytoplasmic domain-like"/>
    <property type="match status" value="1"/>
</dbReference>
<dbReference type="SUPFAM" id="SSF161111">
    <property type="entry name" value="Cation efflux protein transmembrane domain-like"/>
    <property type="match status" value="1"/>
</dbReference>
<feature type="chain" id="PRO_0000206113" description="Zinc transporter ZitB">
    <location>
        <begin position="1"/>
        <end position="312"/>
    </location>
</feature>
<feature type="transmembrane region" description="Helical" evidence="1">
    <location>
        <begin position="16"/>
        <end position="36"/>
    </location>
</feature>
<feature type="transmembrane region" description="Helical" evidence="1">
    <location>
        <begin position="40"/>
        <end position="60"/>
    </location>
</feature>
<feature type="transmembrane region" description="Helical" evidence="1">
    <location>
        <begin position="81"/>
        <end position="101"/>
    </location>
</feature>
<feature type="transmembrane region" description="Helical" evidence="1">
    <location>
        <begin position="117"/>
        <end position="137"/>
    </location>
</feature>
<feature type="transmembrane region" description="Helical" evidence="1">
    <location>
        <begin position="153"/>
        <end position="173"/>
    </location>
</feature>
<feature type="transmembrane region" description="Helical" evidence="1">
    <location>
        <begin position="177"/>
        <end position="197"/>
    </location>
</feature>
<keyword id="KW-0997">Cell inner membrane</keyword>
<keyword id="KW-1003">Cell membrane</keyword>
<keyword id="KW-0406">Ion transport</keyword>
<keyword id="KW-0472">Membrane</keyword>
<keyword id="KW-1185">Reference proteome</keyword>
<keyword id="KW-0812">Transmembrane</keyword>
<keyword id="KW-1133">Transmembrane helix</keyword>
<keyword id="KW-0813">Transport</keyword>
<keyword id="KW-0862">Zinc</keyword>
<keyword id="KW-0864">Zinc transport</keyword>
<accession>Q8ZGY6</accession>
<accession>Q0WHR6</accession>
<name>ZITB_YERPE</name>
<comment type="function">
    <text evidence="1">Involved in zinc efflux across the cytoplasmic membrane, thus reducing zinc accumulation in the cytoplasm and rendering bacteria more resistant to zinc. It may contribute to zinc homeostasis at low concentrations of zinc.</text>
</comment>
<comment type="subcellular location">
    <subcellularLocation>
        <location evidence="1">Cell inner membrane</location>
        <topology evidence="1">Multi-pass membrane protein</topology>
    </subcellularLocation>
</comment>
<comment type="similarity">
    <text evidence="1">Belongs to the cation diffusion facilitator (CDF) transporter (TC 2.A.4) family. SLC30A subfamily.</text>
</comment>
<gene>
    <name evidence="1" type="primary">zitB</name>
    <name type="ordered locus">YPO1129</name>
    <name type="ordered locus">y3050</name>
    <name type="ordered locus">YP_1027</name>
</gene>
<sequence>MAVSTIFSQDSNSKRLLIAFAITTLFMVTEAIGGWLSGSLALLADAGHMLTDSAALFIALMAVHFSQRKPDPRHTFGYLRLTTLAAFVNAAALLLIVILIVWEAVHRFFSPHEVMGTPMLIIAIAGLLANIFCFWILHKGEEEKNINVRAAALHVLSDLLGSVGAMIAAIVILTTGWTPIDPILSVLVSVLILRSAWRLLKESFHELLEGAPQEIDINKLRKDLCTNIYEVRNIHHVHLWQVGEQRLMTLHAQVIPPLDHDALLQRIQDYLLHHYRISHATVQMEYQHCGTPDCGINQAAPADGHHRHHHHE</sequence>
<reference key="1">
    <citation type="journal article" date="2001" name="Nature">
        <title>Genome sequence of Yersinia pestis, the causative agent of plague.</title>
        <authorList>
            <person name="Parkhill J."/>
            <person name="Wren B.W."/>
            <person name="Thomson N.R."/>
            <person name="Titball R.W."/>
            <person name="Holden M.T.G."/>
            <person name="Prentice M.B."/>
            <person name="Sebaihia M."/>
            <person name="James K.D."/>
            <person name="Churcher C.M."/>
            <person name="Mungall K.L."/>
            <person name="Baker S."/>
            <person name="Basham D."/>
            <person name="Bentley S.D."/>
            <person name="Brooks K."/>
            <person name="Cerdeno-Tarraga A.-M."/>
            <person name="Chillingworth T."/>
            <person name="Cronin A."/>
            <person name="Davies R.M."/>
            <person name="Davis P."/>
            <person name="Dougan G."/>
            <person name="Feltwell T."/>
            <person name="Hamlin N."/>
            <person name="Holroyd S."/>
            <person name="Jagels K."/>
            <person name="Karlyshev A.V."/>
            <person name="Leather S."/>
            <person name="Moule S."/>
            <person name="Oyston P.C.F."/>
            <person name="Quail M.A."/>
            <person name="Rutherford K.M."/>
            <person name="Simmonds M."/>
            <person name="Skelton J."/>
            <person name="Stevens K."/>
            <person name="Whitehead S."/>
            <person name="Barrell B.G."/>
        </authorList>
    </citation>
    <scope>NUCLEOTIDE SEQUENCE [LARGE SCALE GENOMIC DNA]</scope>
    <source>
        <strain>CO-92 / Biovar Orientalis</strain>
    </source>
</reference>
<reference key="2">
    <citation type="journal article" date="2002" name="J. Bacteriol.">
        <title>Genome sequence of Yersinia pestis KIM.</title>
        <authorList>
            <person name="Deng W."/>
            <person name="Burland V."/>
            <person name="Plunkett G. III"/>
            <person name="Boutin A."/>
            <person name="Mayhew G.F."/>
            <person name="Liss P."/>
            <person name="Perna N.T."/>
            <person name="Rose D.J."/>
            <person name="Mau B."/>
            <person name="Zhou S."/>
            <person name="Schwartz D.C."/>
            <person name="Fetherston J.D."/>
            <person name="Lindler L.E."/>
            <person name="Brubaker R.R."/>
            <person name="Plano G.V."/>
            <person name="Straley S.C."/>
            <person name="McDonough K.A."/>
            <person name="Nilles M.L."/>
            <person name="Matson J.S."/>
            <person name="Blattner F.R."/>
            <person name="Perry R.D."/>
        </authorList>
    </citation>
    <scope>NUCLEOTIDE SEQUENCE [LARGE SCALE GENOMIC DNA]</scope>
    <source>
        <strain>KIM10+ / Biovar Mediaevalis</strain>
    </source>
</reference>
<reference key="3">
    <citation type="journal article" date="2004" name="DNA Res.">
        <title>Complete genome sequence of Yersinia pestis strain 91001, an isolate avirulent to humans.</title>
        <authorList>
            <person name="Song Y."/>
            <person name="Tong Z."/>
            <person name="Wang J."/>
            <person name="Wang L."/>
            <person name="Guo Z."/>
            <person name="Han Y."/>
            <person name="Zhang J."/>
            <person name="Pei D."/>
            <person name="Zhou D."/>
            <person name="Qin H."/>
            <person name="Pang X."/>
            <person name="Han Y."/>
            <person name="Zhai J."/>
            <person name="Li M."/>
            <person name="Cui B."/>
            <person name="Qi Z."/>
            <person name="Jin L."/>
            <person name="Dai R."/>
            <person name="Chen F."/>
            <person name="Li S."/>
            <person name="Ye C."/>
            <person name="Du Z."/>
            <person name="Lin W."/>
            <person name="Wang J."/>
            <person name="Yu J."/>
            <person name="Yang H."/>
            <person name="Wang J."/>
            <person name="Huang P."/>
            <person name="Yang R."/>
        </authorList>
    </citation>
    <scope>NUCLEOTIDE SEQUENCE [LARGE SCALE GENOMIC DNA]</scope>
    <source>
        <strain>91001 / Biovar Mediaevalis</strain>
    </source>
</reference>
<protein>
    <recommendedName>
        <fullName evidence="1">Zinc transporter ZitB</fullName>
    </recommendedName>
</protein>